<feature type="chain" id="PRO_0000241448" description="WD repeat-containing protein 72">
    <location>
        <begin position="1"/>
        <end position="1098"/>
    </location>
</feature>
<feature type="repeat" description="WD 1">
    <location>
        <begin position="15"/>
        <end position="54"/>
    </location>
</feature>
<feature type="repeat" description="WD 2">
    <location>
        <begin position="60"/>
        <end position="102"/>
    </location>
</feature>
<feature type="repeat" description="WD 3">
    <location>
        <begin position="158"/>
        <end position="196"/>
    </location>
</feature>
<feature type="repeat" description="WD 4">
    <location>
        <begin position="315"/>
        <end position="359"/>
    </location>
</feature>
<feature type="repeat" description="WD 5">
    <location>
        <begin position="399"/>
        <end position="438"/>
    </location>
</feature>
<feature type="repeat" description="WD 6">
    <location>
        <begin position="456"/>
        <end position="501"/>
    </location>
</feature>
<feature type="repeat" description="WD 7">
    <location>
        <begin position="504"/>
        <end position="549"/>
    </location>
</feature>
<feature type="repeat" description="WD 8">
    <location>
        <begin position="552"/>
        <end position="591"/>
    </location>
</feature>
<feature type="modified residue" description="Phosphoserine" evidence="1">
    <location>
        <position position="1077"/>
    </location>
</feature>
<feature type="modified residue" description="Phosphoserine" evidence="1">
    <location>
        <position position="1079"/>
    </location>
</feature>
<organism>
    <name type="scientific">Pongo abelii</name>
    <name type="common">Sumatran orangutan</name>
    <name type="synonym">Pongo pygmaeus abelii</name>
    <dbReference type="NCBI Taxonomy" id="9601"/>
    <lineage>
        <taxon>Eukaryota</taxon>
        <taxon>Metazoa</taxon>
        <taxon>Chordata</taxon>
        <taxon>Craniata</taxon>
        <taxon>Vertebrata</taxon>
        <taxon>Euteleostomi</taxon>
        <taxon>Mammalia</taxon>
        <taxon>Eutheria</taxon>
        <taxon>Euarchontoglires</taxon>
        <taxon>Primates</taxon>
        <taxon>Haplorrhini</taxon>
        <taxon>Catarrhini</taxon>
        <taxon>Hominidae</taxon>
        <taxon>Pongo</taxon>
    </lineage>
</organism>
<keyword id="KW-0091">Biomineralization</keyword>
<keyword id="KW-0968">Cytoplasmic vesicle</keyword>
<keyword id="KW-0597">Phosphoprotein</keyword>
<keyword id="KW-1185">Reference proteome</keyword>
<keyword id="KW-0677">Repeat</keyword>
<keyword id="KW-0853">WD repeat</keyword>
<proteinExistence type="evidence at transcript level"/>
<name>WDR72_PONAB</name>
<comment type="function">
    <text evidence="1">Plays a major role in formation of tooth enamel. Specifically required during the maturation phase of amelogenesis for normal formation of the enamel matrix and clearance of enamel proteins. May be involved in localization of the calcium transporter SLC24A4 to the ameloblast cell membrane.</text>
</comment>
<comment type="subcellular location">
    <subcellularLocation>
        <location evidence="1">Cytoplasmic vesicle</location>
    </subcellularLocation>
</comment>
<dbReference type="EMBL" id="CR857098">
    <property type="protein sequence ID" value="CAH89403.1"/>
    <property type="molecule type" value="mRNA"/>
</dbReference>
<dbReference type="RefSeq" id="NP_001124592.1">
    <property type="nucleotide sequence ID" value="NM_001131120.1"/>
</dbReference>
<dbReference type="FunCoup" id="Q5RFQ4">
    <property type="interactions" value="249"/>
</dbReference>
<dbReference type="STRING" id="9601.ENSPPYP00000007359"/>
<dbReference type="GeneID" id="100450039"/>
<dbReference type="KEGG" id="pon:100450039"/>
<dbReference type="CTD" id="256764"/>
<dbReference type="eggNOG" id="KOG4155">
    <property type="taxonomic scope" value="Eukaryota"/>
</dbReference>
<dbReference type="InParanoid" id="Q5RFQ4"/>
<dbReference type="OrthoDB" id="338622at2759"/>
<dbReference type="Proteomes" id="UP000001595">
    <property type="component" value="Unplaced"/>
</dbReference>
<dbReference type="GO" id="GO:0031410">
    <property type="term" value="C:cytoplasmic vesicle"/>
    <property type="evidence" value="ECO:0007669"/>
    <property type="project" value="UniProtKB-KW"/>
</dbReference>
<dbReference type="GO" id="GO:0031214">
    <property type="term" value="P:biomineral tissue development"/>
    <property type="evidence" value="ECO:0007669"/>
    <property type="project" value="UniProtKB-KW"/>
</dbReference>
<dbReference type="GO" id="GO:0072659">
    <property type="term" value="P:protein localization to plasma membrane"/>
    <property type="evidence" value="ECO:0007669"/>
    <property type="project" value="TreeGrafter"/>
</dbReference>
<dbReference type="FunFam" id="2.130.10.10:FF:000247">
    <property type="entry name" value="WD repeat-containing protein 72"/>
    <property type="match status" value="1"/>
</dbReference>
<dbReference type="FunFam" id="2.130.10.10:FF:000686">
    <property type="entry name" value="WD repeat-containing protein 72"/>
    <property type="match status" value="1"/>
</dbReference>
<dbReference type="Gene3D" id="2.130.10.10">
    <property type="entry name" value="YVTN repeat-like/Quinoprotein amine dehydrogenase"/>
    <property type="match status" value="2"/>
</dbReference>
<dbReference type="InterPro" id="IPR015943">
    <property type="entry name" value="WD40/YVTN_repeat-like_dom_sf"/>
</dbReference>
<dbReference type="InterPro" id="IPR019775">
    <property type="entry name" value="WD40_repeat_CS"/>
</dbReference>
<dbReference type="InterPro" id="IPR036322">
    <property type="entry name" value="WD40_repeat_dom_sf"/>
</dbReference>
<dbReference type="InterPro" id="IPR001680">
    <property type="entry name" value="WD40_rpt"/>
</dbReference>
<dbReference type="InterPro" id="IPR049916">
    <property type="entry name" value="WDR7/72"/>
</dbReference>
<dbReference type="PANTHER" id="PTHR44099">
    <property type="entry name" value="RABCONNECTIN-3B, ISOFORM A"/>
    <property type="match status" value="1"/>
</dbReference>
<dbReference type="PANTHER" id="PTHR44099:SF2">
    <property type="entry name" value="WD REPEAT-CONTAINING PROTEIN 72"/>
    <property type="match status" value="1"/>
</dbReference>
<dbReference type="Pfam" id="PF00400">
    <property type="entry name" value="WD40"/>
    <property type="match status" value="4"/>
</dbReference>
<dbReference type="Pfam" id="PF23123">
    <property type="entry name" value="WDR72_alpha-sol"/>
    <property type="match status" value="1"/>
</dbReference>
<dbReference type="SMART" id="SM00320">
    <property type="entry name" value="WD40"/>
    <property type="match status" value="7"/>
</dbReference>
<dbReference type="SUPFAM" id="SSF117289">
    <property type="entry name" value="Nucleoporin domain"/>
    <property type="match status" value="1"/>
</dbReference>
<dbReference type="SUPFAM" id="SSF50978">
    <property type="entry name" value="WD40 repeat-like"/>
    <property type="match status" value="1"/>
</dbReference>
<dbReference type="PROSITE" id="PS00678">
    <property type="entry name" value="WD_REPEATS_1"/>
    <property type="match status" value="2"/>
</dbReference>
<dbReference type="PROSITE" id="PS50082">
    <property type="entry name" value="WD_REPEATS_2"/>
    <property type="match status" value="3"/>
</dbReference>
<dbReference type="PROSITE" id="PS50294">
    <property type="entry name" value="WD_REPEATS_REGION"/>
    <property type="match status" value="2"/>
</dbReference>
<gene>
    <name type="primary">WDR72</name>
</gene>
<accession>Q5RFQ4</accession>
<protein>
    <recommendedName>
        <fullName>WD repeat-containing protein 72</fullName>
    </recommendedName>
</protein>
<evidence type="ECO:0000250" key="1">
    <source>
        <dbReference type="UniProtKB" id="D3YYM4"/>
    </source>
</evidence>
<reference key="1">
    <citation type="submission" date="2004-11" db="EMBL/GenBank/DDBJ databases">
        <authorList>
            <consortium name="The German cDNA consortium"/>
        </authorList>
    </citation>
    <scope>NUCLEOTIDE SEQUENCE [LARGE SCALE MRNA]</scope>
    <source>
        <tissue>Kidney</tissue>
    </source>
</reference>
<sequence>MRTSLQAVALWGQKAPPHSITAIMITDDQRMIVTGSQEGQLCLWNLSHELKISAKELLFGHSASVTCLARARDFSKQPYIVSAAENGEMCVWNVTNGQCVEKATLPYRHTAICYYHCSFRMTGEGWLLCCGEYQDVLIIDAKTLAVVHSFRSSQFPDWINCMCIVHSMRIQDSLLVVSVAGELKVWDLSSSINSIQEKQDVYEKESKFLESLNCQTIRFCTYTERLLLVVFSKCWKVYDYCDFSLLLTEVSRNGQFFAGGEVIAAHRILIWTEDGHSYIYQLLNSGLSKSIYPADGRVLKETIYPHLLCSTSVQENKNRPFVMGYMNERKEPFYKVLFSGEVSGRITLWHIPDVPVSKFDGSPREIPVTATWTLQDNFDKHDTVSQSIIDYFSGLKDGAGTAVVTSSEYIPSLDKLICGCEDGTIIITQALNAAKARLLEGGSLVKDSSPHKVLKGHHQSVTSLLYPHGLSSKLDQSWMLSGDLDSCVILWDIFTEEILHKFFLEAGPVTSLLMSPEKFKLRGAQIICCVCSDHSVALLHLEGRSCLLRARKHLFPVKMIKWHPVENFLIVGCADDSVYIWEIETGTLERHETGERARIILNCCDDSQLVKSVFPIASETLKHKSIEQRSSSPYQLGPLPCPGLQVESSCKVIDAKFCPRPFNVLPVKTKWSNVGFHILLFDLENLVELLLPTPLSDVDSSSSFYGGEVLRRAKSTVEKKTLTLRKSKTACGPLSAEALAKPITESPAQGDNTIKFSAENDGIKRQKKMKISKKMQPKPSRKVDASLTIDTAKLFLSCLLPWGVDDLDYLCIKHLNILKLQGPISLGFASNEDNFSLMLPGWDLCNTEMIKDYSGVNLFSRKVLDLSDKYTATLPNQVGIPRGLENNCDSLQESDTIVYLLSRLFLVNKLVNMPLELACRVGSSFRMECVHNKVRSAGNDILNMSSFYSCLRNGKNESHVPEADLSLLKLISCWRDQSVQVTEAIQAVLWAEVQQHMKSLGKIPVNSQPVSMAENGNCEMKQMLPKLEWTEELELQCIRNTLPLQTPVSPVKHDSNLNSANIQDMEDMPDRCVLEESESPGEPRHHSWIAKVCPCKVS</sequence>